<organism>
    <name type="scientific">Milnesium tardigradum</name>
    <name type="common">Water bear</name>
    <name type="synonym">Tardigrade</name>
    <dbReference type="NCBI Taxonomy" id="46460"/>
    <lineage>
        <taxon>Eukaryota</taxon>
        <taxon>Metazoa</taxon>
        <taxon>Ecdysozoa</taxon>
        <taxon>Tardigrada</taxon>
        <taxon>Eutardigrada</taxon>
        <taxon>Apochela</taxon>
        <taxon>Milnesiidae</taxon>
        <taxon>Milnesium</taxon>
    </lineage>
</organism>
<name>AQP11_MILTA</name>
<evidence type="ECO:0000255" key="1"/>
<evidence type="ECO:0000255" key="2">
    <source>
        <dbReference type="PROSITE-ProRule" id="PRU00498"/>
    </source>
</evidence>
<evidence type="ECO:0000269" key="3">
    <source>
    </source>
</evidence>
<evidence type="ECO:0000303" key="4">
    <source>
    </source>
</evidence>
<evidence type="ECO:0000305" key="5"/>
<evidence type="ECO:0000305" key="6">
    <source>
    </source>
</evidence>
<accession>G5CTG8</accession>
<protein>
    <recommendedName>
        <fullName evidence="4">Aquaporin-11</fullName>
        <shortName evidence="4">AQP-11</shortName>
    </recommendedName>
</protein>
<feature type="chain" id="PRO_0000440212" description="Aquaporin-11">
    <location>
        <begin position="1"/>
        <end position="270"/>
    </location>
</feature>
<feature type="transmembrane region" description="Helical" evidence="1">
    <location>
        <begin position="5"/>
        <end position="25"/>
    </location>
</feature>
<feature type="transmembrane region" description="Helical" evidence="1">
    <location>
        <begin position="59"/>
        <end position="79"/>
    </location>
</feature>
<feature type="transmembrane region" description="Helical" evidence="1">
    <location>
        <begin position="120"/>
        <end position="140"/>
    </location>
</feature>
<feature type="transmembrane region" description="Helical" evidence="1">
    <location>
        <begin position="153"/>
        <end position="173"/>
    </location>
</feature>
<feature type="transmembrane region" description="Helical" evidence="1">
    <location>
        <begin position="184"/>
        <end position="204"/>
    </location>
</feature>
<feature type="transmembrane region" description="Helical" evidence="1">
    <location>
        <begin position="220"/>
        <end position="240"/>
    </location>
</feature>
<feature type="short sequence motif" description="NPA 1">
    <location>
        <begin position="94"/>
        <end position="96"/>
    </location>
</feature>
<feature type="short sequence motif" description="NPA 2">
    <location>
        <begin position="207"/>
        <end position="209"/>
    </location>
</feature>
<feature type="glycosylation site" description="N-linked (GlcNAc...) asparagine" evidence="2">
    <location>
        <position position="148"/>
    </location>
</feature>
<keyword id="KW-0325">Glycoprotein</keyword>
<keyword id="KW-0472">Membrane</keyword>
<keyword id="KW-0677">Repeat</keyword>
<keyword id="KW-0346">Stress response</keyword>
<keyword id="KW-0812">Transmembrane</keyword>
<keyword id="KW-1133">Transmembrane helix</keyword>
<dbReference type="EMBL" id="JN378746">
    <property type="protein sequence ID" value="AEP14565.2"/>
    <property type="molecule type" value="mRNA"/>
</dbReference>
<dbReference type="SMR" id="G5CTG8"/>
<dbReference type="GlyCosmos" id="G5CTG8">
    <property type="glycosylation" value="1 site, No reported glycans"/>
</dbReference>
<dbReference type="GO" id="GO:0005737">
    <property type="term" value="C:cytoplasm"/>
    <property type="evidence" value="ECO:0007669"/>
    <property type="project" value="TreeGrafter"/>
</dbReference>
<dbReference type="GO" id="GO:0016020">
    <property type="term" value="C:membrane"/>
    <property type="evidence" value="ECO:0007669"/>
    <property type="project" value="UniProtKB-SubCell"/>
</dbReference>
<dbReference type="GO" id="GO:0015267">
    <property type="term" value="F:channel activity"/>
    <property type="evidence" value="ECO:0007669"/>
    <property type="project" value="TreeGrafter"/>
</dbReference>
<dbReference type="Gene3D" id="1.20.1080.10">
    <property type="entry name" value="Glycerol uptake facilitator protein"/>
    <property type="match status" value="1"/>
</dbReference>
<dbReference type="InterPro" id="IPR051883">
    <property type="entry name" value="AQP11/12_channel"/>
</dbReference>
<dbReference type="InterPro" id="IPR023271">
    <property type="entry name" value="Aquaporin-like"/>
</dbReference>
<dbReference type="InterPro" id="IPR016697">
    <property type="entry name" value="Aquaporin_11/12"/>
</dbReference>
<dbReference type="PANTHER" id="PTHR21191">
    <property type="entry name" value="AQUAPORIN"/>
    <property type="match status" value="1"/>
</dbReference>
<dbReference type="PANTHER" id="PTHR21191:SF16">
    <property type="entry name" value="AQUAPORIN"/>
    <property type="match status" value="1"/>
</dbReference>
<dbReference type="PIRSF" id="PIRSF017529">
    <property type="entry name" value="Aquaporin_11/12"/>
    <property type="match status" value="1"/>
</dbReference>
<dbReference type="SUPFAM" id="SSF81338">
    <property type="entry name" value="Aquaporin-like"/>
    <property type="match status" value="1"/>
</dbReference>
<comment type="function">
    <text evidence="6">Probable intracellular unorthodox aquaporin that may modulate the water content and osmolytes during anhydrobiosis (PubMed:23761966).</text>
</comment>
<comment type="catalytic activity">
    <reaction evidence="6">
        <text>H2O(in) = H2O(out)</text>
        <dbReference type="Rhea" id="RHEA:29667"/>
        <dbReference type="ChEBI" id="CHEBI:15377"/>
    </reaction>
</comment>
<comment type="subcellular location">
    <subcellularLocation>
        <location evidence="5">Membrane</location>
        <topology evidence="1">Multi-pass membrane protein</topology>
    </subcellularLocation>
</comment>
<comment type="induction">
    <text evidence="3">Transcript abundance is low and expression levels are completely unaffected by desiccation or rehydratation (PubMed:23761966).</text>
</comment>
<comment type="domain">
    <text evidence="6">Aquaporins contain two tandem repeats each containing three membrane-spanning domains and a pore-forming loop with the signature motif Asn-Pro-Ala (NPA).</text>
</comment>
<comment type="similarity">
    <text evidence="5">Belongs to the MIP/aquaporin (TC 1.A.8) family.</text>
</comment>
<reference key="1">
    <citation type="journal article" date="2013" name="Bioinf. Biol. Insights">
        <title>The aquaporin channel repertoire of the tardigrade Milnesium tardigradum.</title>
        <authorList>
            <person name="Grohme M.A."/>
            <person name="Mali B."/>
            <person name="Welnicz W."/>
            <person name="Michel S."/>
            <person name="Schill R.O."/>
            <person name="Frohme M."/>
        </authorList>
    </citation>
    <scope>NUCLEOTIDE SEQUENCE [MRNA]</scope>
    <scope>DOMAIN</scope>
    <scope>INDUCTION</scope>
</reference>
<gene>
    <name evidence="4" type="primary">AQP11</name>
</gene>
<proteinExistence type="evidence at transcript level"/>
<sequence length="270" mass="30369">MYTQIMTMYPLLISILHILFIISICQLCRYVSNVLVKHSLARIAIEEFICAVQLCATNFELGVITQIYGFSAYALGLFFCSFTYTFTFQDGTCDPSECYEKFCKREMSAREAVLRATFSIMGAAVSYRFAKIFWSFGLMATHMDFYKNESCDASLQVPVLIGLGFETFETIVNRLLQNMRHYNMLISAISDVCITFFGLFVSGGYFNPTLSFAMEYGCQGLSGPSFFLVYWFGPILGSSISLKIAKPLLRIIEGSDEAKVEVVDAKAHSD</sequence>